<reference key="1">
    <citation type="submission" date="2009-07" db="EMBL/GenBank/DDBJ databases">
        <title>Complete sequence of Pectobacterium carotovorum subsp. carotovorum PC1.</title>
        <authorList>
            <consortium name="US DOE Joint Genome Institute"/>
            <person name="Lucas S."/>
            <person name="Copeland A."/>
            <person name="Lapidus A."/>
            <person name="Glavina del Rio T."/>
            <person name="Tice H."/>
            <person name="Bruce D."/>
            <person name="Goodwin L."/>
            <person name="Pitluck S."/>
            <person name="Munk A.C."/>
            <person name="Brettin T."/>
            <person name="Detter J.C."/>
            <person name="Han C."/>
            <person name="Tapia R."/>
            <person name="Larimer F."/>
            <person name="Land M."/>
            <person name="Hauser L."/>
            <person name="Kyrpides N."/>
            <person name="Mikhailova N."/>
            <person name="Balakrishnan V."/>
            <person name="Glasner J."/>
            <person name="Perna N.T."/>
        </authorList>
    </citation>
    <scope>NUCLEOTIDE SEQUENCE [LARGE SCALE GENOMIC DNA]</scope>
    <source>
        <strain>PC1</strain>
    </source>
</reference>
<feature type="chain" id="PRO_1000204187" description="Anthranilate phosphoribosyltransferase">
    <location>
        <begin position="1"/>
        <end position="355"/>
    </location>
</feature>
<feature type="binding site" evidence="1">
    <location>
        <position position="102"/>
    </location>
    <ligand>
        <name>5-phospho-alpha-D-ribose 1-diphosphate</name>
        <dbReference type="ChEBI" id="CHEBI:58017"/>
    </ligand>
</feature>
<feature type="binding site" evidence="1">
    <location>
        <position position="102"/>
    </location>
    <ligand>
        <name>anthranilate</name>
        <dbReference type="ChEBI" id="CHEBI:16567"/>
        <label>1</label>
    </ligand>
</feature>
<feature type="binding site" evidence="1">
    <location>
        <begin position="105"/>
        <end position="106"/>
    </location>
    <ligand>
        <name>5-phospho-alpha-D-ribose 1-diphosphate</name>
        <dbReference type="ChEBI" id="CHEBI:58017"/>
    </ligand>
</feature>
<feature type="binding site" evidence="1">
    <location>
        <position position="110"/>
    </location>
    <ligand>
        <name>5-phospho-alpha-D-ribose 1-diphosphate</name>
        <dbReference type="ChEBI" id="CHEBI:58017"/>
    </ligand>
</feature>
<feature type="binding site" evidence="1">
    <location>
        <begin position="112"/>
        <end position="115"/>
    </location>
    <ligand>
        <name>5-phospho-alpha-D-ribose 1-diphosphate</name>
        <dbReference type="ChEBI" id="CHEBI:58017"/>
    </ligand>
</feature>
<feature type="binding site" evidence="1">
    <location>
        <position position="114"/>
    </location>
    <ligand>
        <name>Mg(2+)</name>
        <dbReference type="ChEBI" id="CHEBI:18420"/>
        <label>1</label>
    </ligand>
</feature>
<feature type="binding site" evidence="1">
    <location>
        <begin position="130"/>
        <end position="138"/>
    </location>
    <ligand>
        <name>5-phospho-alpha-D-ribose 1-diphosphate</name>
        <dbReference type="ChEBI" id="CHEBI:58017"/>
    </ligand>
</feature>
<feature type="binding site" evidence="1">
    <location>
        <position position="133"/>
    </location>
    <ligand>
        <name>anthranilate</name>
        <dbReference type="ChEBI" id="CHEBI:16567"/>
        <label>1</label>
    </ligand>
</feature>
<feature type="binding site" evidence="1">
    <location>
        <position position="142"/>
    </location>
    <ligand>
        <name>5-phospho-alpha-D-ribose 1-diphosphate</name>
        <dbReference type="ChEBI" id="CHEBI:58017"/>
    </ligand>
</feature>
<feature type="binding site" evidence="1">
    <location>
        <position position="188"/>
    </location>
    <ligand>
        <name>anthranilate</name>
        <dbReference type="ChEBI" id="CHEBI:16567"/>
        <label>2</label>
    </ligand>
</feature>
<feature type="binding site" evidence="1">
    <location>
        <position position="246"/>
    </location>
    <ligand>
        <name>Mg(2+)</name>
        <dbReference type="ChEBI" id="CHEBI:18420"/>
        <label>2</label>
    </ligand>
</feature>
<feature type="binding site" evidence="1">
    <location>
        <position position="247"/>
    </location>
    <ligand>
        <name>Mg(2+)</name>
        <dbReference type="ChEBI" id="CHEBI:18420"/>
        <label>1</label>
    </ligand>
</feature>
<feature type="binding site" evidence="1">
    <location>
        <position position="247"/>
    </location>
    <ligand>
        <name>Mg(2+)</name>
        <dbReference type="ChEBI" id="CHEBI:18420"/>
        <label>2</label>
    </ligand>
</feature>
<name>TRPD_PECCP</name>
<dbReference type="EC" id="2.4.2.18" evidence="1"/>
<dbReference type="EMBL" id="CP001657">
    <property type="protein sequence ID" value="ACT13046.1"/>
    <property type="molecule type" value="Genomic_DNA"/>
</dbReference>
<dbReference type="SMR" id="C6DGZ7"/>
<dbReference type="STRING" id="561230.PC1_2005"/>
<dbReference type="KEGG" id="pct:PC1_2005"/>
<dbReference type="eggNOG" id="COG0547">
    <property type="taxonomic scope" value="Bacteria"/>
</dbReference>
<dbReference type="HOGENOM" id="CLU_034315_2_1_6"/>
<dbReference type="UniPathway" id="UPA00035">
    <property type="reaction ID" value="UER00041"/>
</dbReference>
<dbReference type="Proteomes" id="UP000002736">
    <property type="component" value="Chromosome"/>
</dbReference>
<dbReference type="GO" id="GO:0005829">
    <property type="term" value="C:cytosol"/>
    <property type="evidence" value="ECO:0007669"/>
    <property type="project" value="TreeGrafter"/>
</dbReference>
<dbReference type="GO" id="GO:0004048">
    <property type="term" value="F:anthranilate phosphoribosyltransferase activity"/>
    <property type="evidence" value="ECO:0007669"/>
    <property type="project" value="UniProtKB-UniRule"/>
</dbReference>
<dbReference type="GO" id="GO:0000287">
    <property type="term" value="F:magnesium ion binding"/>
    <property type="evidence" value="ECO:0007669"/>
    <property type="project" value="UniProtKB-UniRule"/>
</dbReference>
<dbReference type="GO" id="GO:0000162">
    <property type="term" value="P:L-tryptophan biosynthetic process"/>
    <property type="evidence" value="ECO:0007669"/>
    <property type="project" value="UniProtKB-UniRule"/>
</dbReference>
<dbReference type="FunFam" id="1.20.970.10:FF:000003">
    <property type="entry name" value="Anthranilate phosphoribosyltransferase"/>
    <property type="match status" value="1"/>
</dbReference>
<dbReference type="FunFam" id="3.40.1030.10:FF:000002">
    <property type="entry name" value="Anthranilate phosphoribosyltransferase"/>
    <property type="match status" value="1"/>
</dbReference>
<dbReference type="Gene3D" id="3.40.1030.10">
    <property type="entry name" value="Nucleoside phosphorylase/phosphoribosyltransferase catalytic domain"/>
    <property type="match status" value="1"/>
</dbReference>
<dbReference type="Gene3D" id="1.20.970.10">
    <property type="entry name" value="Transferase, Pyrimidine Nucleoside Phosphorylase, Chain C"/>
    <property type="match status" value="1"/>
</dbReference>
<dbReference type="HAMAP" id="MF_00211">
    <property type="entry name" value="TrpD"/>
    <property type="match status" value="1"/>
</dbReference>
<dbReference type="InterPro" id="IPR005940">
    <property type="entry name" value="Anthranilate_Pribosyl_Tfrase"/>
</dbReference>
<dbReference type="InterPro" id="IPR000312">
    <property type="entry name" value="Glycosyl_Trfase_fam3"/>
</dbReference>
<dbReference type="InterPro" id="IPR017459">
    <property type="entry name" value="Glycosyl_Trfase_fam3_N_dom"/>
</dbReference>
<dbReference type="InterPro" id="IPR036320">
    <property type="entry name" value="Glycosyl_Trfase_fam3_N_dom_sf"/>
</dbReference>
<dbReference type="InterPro" id="IPR035902">
    <property type="entry name" value="Nuc_phospho_transferase"/>
</dbReference>
<dbReference type="NCBIfam" id="TIGR01245">
    <property type="entry name" value="trpD"/>
    <property type="match status" value="1"/>
</dbReference>
<dbReference type="PANTHER" id="PTHR43285">
    <property type="entry name" value="ANTHRANILATE PHOSPHORIBOSYLTRANSFERASE"/>
    <property type="match status" value="1"/>
</dbReference>
<dbReference type="PANTHER" id="PTHR43285:SF2">
    <property type="entry name" value="ANTHRANILATE PHOSPHORIBOSYLTRANSFERASE"/>
    <property type="match status" value="1"/>
</dbReference>
<dbReference type="Pfam" id="PF02885">
    <property type="entry name" value="Glycos_trans_3N"/>
    <property type="match status" value="1"/>
</dbReference>
<dbReference type="Pfam" id="PF00591">
    <property type="entry name" value="Glycos_transf_3"/>
    <property type="match status" value="1"/>
</dbReference>
<dbReference type="SUPFAM" id="SSF52418">
    <property type="entry name" value="Nucleoside phosphorylase/phosphoribosyltransferase catalytic domain"/>
    <property type="match status" value="1"/>
</dbReference>
<dbReference type="SUPFAM" id="SSF47648">
    <property type="entry name" value="Nucleoside phosphorylase/phosphoribosyltransferase N-terminal domain"/>
    <property type="match status" value="1"/>
</dbReference>
<proteinExistence type="inferred from homology"/>
<protein>
    <recommendedName>
        <fullName evidence="1">Anthranilate phosphoribosyltransferase</fullName>
        <ecNumber evidence="1">2.4.2.18</ecNumber>
    </recommendedName>
</protein>
<organism>
    <name type="scientific">Pectobacterium carotovorum subsp. carotovorum (strain PC1)</name>
    <dbReference type="NCBI Taxonomy" id="561230"/>
    <lineage>
        <taxon>Bacteria</taxon>
        <taxon>Pseudomonadati</taxon>
        <taxon>Pseudomonadota</taxon>
        <taxon>Gammaproteobacteria</taxon>
        <taxon>Enterobacterales</taxon>
        <taxon>Pectobacteriaceae</taxon>
        <taxon>Pectobacterium</taxon>
    </lineage>
</organism>
<gene>
    <name evidence="1" type="primary">trpD</name>
    <name type="ordered locus">PC1_2005</name>
</gene>
<comment type="function">
    <text evidence="1">Catalyzes the transfer of the phosphoribosyl group of 5-phosphorylribose-1-pyrophosphate (PRPP) to anthranilate to yield N-(5'-phosphoribosyl)-anthranilate (PRA).</text>
</comment>
<comment type="catalytic activity">
    <reaction evidence="1">
        <text>N-(5-phospho-beta-D-ribosyl)anthranilate + diphosphate = 5-phospho-alpha-D-ribose 1-diphosphate + anthranilate</text>
        <dbReference type="Rhea" id="RHEA:11768"/>
        <dbReference type="ChEBI" id="CHEBI:16567"/>
        <dbReference type="ChEBI" id="CHEBI:18277"/>
        <dbReference type="ChEBI" id="CHEBI:33019"/>
        <dbReference type="ChEBI" id="CHEBI:58017"/>
        <dbReference type="EC" id="2.4.2.18"/>
    </reaction>
</comment>
<comment type="cofactor">
    <cofactor evidence="1">
        <name>Mg(2+)</name>
        <dbReference type="ChEBI" id="CHEBI:18420"/>
    </cofactor>
    <text evidence="1">Binds 2 magnesium ions per monomer.</text>
</comment>
<comment type="pathway">
    <text evidence="1">Amino-acid biosynthesis; L-tryptophan biosynthesis; L-tryptophan from chorismate: step 2/5.</text>
</comment>
<comment type="subunit">
    <text evidence="1">Homodimer.</text>
</comment>
<comment type="similarity">
    <text evidence="1">Belongs to the anthranilate phosphoribosyltransferase family.</text>
</comment>
<sequence>MQLSSTKPSSKTREPSTAQDIVTMQNILEKLYRAESISRQESQALFGAIIRGELEASQLAAALISMKVRGEHPDEIAGAATALLADAQPFPRPDYLFADIVGTGGDGTNSINISTASAFVAASCGLKIAKHGNRSVSSRSGSSDLLSAFGIKLDMSAQDSRQALDDLGVCFLFAPQYHLGFRHAMPVRQQLKTRTVFNVLGPLVNPARPPLALIGVYSPELVRPIAETLKVLGYQRAAVVHGGGMDEVAIHAPTQVAELNNGEIETYELTHRDFGLDTYSLSALQGGTPEENRDILASLLQGKGERAHAAAVAANVALLLRLFGQENLRQNAQQALEVIHSGQAYQRVIALSARG</sequence>
<evidence type="ECO:0000255" key="1">
    <source>
        <dbReference type="HAMAP-Rule" id="MF_00211"/>
    </source>
</evidence>
<accession>C6DGZ7</accession>
<keyword id="KW-0028">Amino-acid biosynthesis</keyword>
<keyword id="KW-0057">Aromatic amino acid biosynthesis</keyword>
<keyword id="KW-0328">Glycosyltransferase</keyword>
<keyword id="KW-0460">Magnesium</keyword>
<keyword id="KW-0479">Metal-binding</keyword>
<keyword id="KW-0808">Transferase</keyword>
<keyword id="KW-0822">Tryptophan biosynthesis</keyword>